<comment type="function">
    <text evidence="1">Required to facilitate the formation of correct disulfide bonds in some periplasmic proteins and for the assembly of the periplasmic c-type cytochromes. Acts by transferring electrons from cytoplasmic thioredoxin to the periplasm. This transfer involves a cascade of disulfide bond formation and reduction steps (By similarity).</text>
</comment>
<comment type="catalytic activity">
    <reaction>
        <text>[protein]-dithiol + NAD(+) = [protein]-disulfide + NADH + H(+)</text>
        <dbReference type="Rhea" id="RHEA:18749"/>
        <dbReference type="Rhea" id="RHEA-COMP:10593"/>
        <dbReference type="Rhea" id="RHEA-COMP:10594"/>
        <dbReference type="ChEBI" id="CHEBI:15378"/>
        <dbReference type="ChEBI" id="CHEBI:29950"/>
        <dbReference type="ChEBI" id="CHEBI:50058"/>
        <dbReference type="ChEBI" id="CHEBI:57540"/>
        <dbReference type="ChEBI" id="CHEBI:57945"/>
        <dbReference type="EC" id="1.8.1.8"/>
    </reaction>
</comment>
<comment type="catalytic activity">
    <reaction>
        <text>[protein]-dithiol + NADP(+) = [protein]-disulfide + NADPH + H(+)</text>
        <dbReference type="Rhea" id="RHEA:18753"/>
        <dbReference type="Rhea" id="RHEA-COMP:10593"/>
        <dbReference type="Rhea" id="RHEA-COMP:10594"/>
        <dbReference type="ChEBI" id="CHEBI:15378"/>
        <dbReference type="ChEBI" id="CHEBI:29950"/>
        <dbReference type="ChEBI" id="CHEBI:50058"/>
        <dbReference type="ChEBI" id="CHEBI:57783"/>
        <dbReference type="ChEBI" id="CHEBI:58349"/>
        <dbReference type="EC" id="1.8.1.8"/>
    </reaction>
</comment>
<comment type="subcellular location">
    <subcellularLocation>
        <location evidence="1">Cell inner membrane</location>
        <topology evidence="1">Multi-pass membrane protein</topology>
    </subcellularLocation>
</comment>
<comment type="similarity">
    <text evidence="4">Belongs to the thioredoxin family. DsbD subfamily.</text>
</comment>
<comment type="sequence caution" evidence="4">
    <conflict type="erroneous initiation">
        <sequence resource="EMBL-CDS" id="CAM08848"/>
    </conflict>
</comment>
<gene>
    <name type="primary">dsbD</name>
    <name type="ordered locus">NMA1719</name>
</gene>
<feature type="signal peptide" evidence="2">
    <location>
        <begin position="1"/>
        <end position="20"/>
    </location>
</feature>
<feature type="chain" id="PRO_0000007377" description="Thiol:disulfide interchange protein DsbD">
    <location>
        <begin position="21"/>
        <end position="601"/>
    </location>
</feature>
<feature type="topological domain" description="Periplasmic" evidence="2">
    <location>
        <begin position="21"/>
        <end position="191"/>
    </location>
</feature>
<feature type="transmembrane region" description="Helical" evidence="2">
    <location>
        <begin position="192"/>
        <end position="212"/>
    </location>
</feature>
<feature type="topological domain" description="Cytoplasmic" evidence="2">
    <location>
        <begin position="213"/>
        <end position="242"/>
    </location>
</feature>
<feature type="transmembrane region" description="Helical" evidence="2">
    <location>
        <begin position="243"/>
        <end position="263"/>
    </location>
</feature>
<feature type="topological domain" description="Periplasmic" evidence="2">
    <location>
        <begin position="264"/>
        <end position="266"/>
    </location>
</feature>
<feature type="transmembrane region" description="Helical" evidence="2">
    <location>
        <begin position="267"/>
        <end position="287"/>
    </location>
</feature>
<feature type="topological domain" description="Cytoplasmic" evidence="2">
    <location>
        <begin position="288"/>
        <end position="310"/>
    </location>
</feature>
<feature type="transmembrane region" description="Helical" evidence="2">
    <location>
        <begin position="311"/>
        <end position="331"/>
    </location>
</feature>
<feature type="topological domain" description="Periplasmic" evidence="2">
    <location>
        <begin position="332"/>
        <end position="346"/>
    </location>
</feature>
<feature type="transmembrane region" description="Helical" evidence="2">
    <location>
        <begin position="347"/>
        <end position="367"/>
    </location>
</feature>
<feature type="topological domain" description="Cytoplasmic" evidence="2">
    <location>
        <begin position="368"/>
        <end position="380"/>
    </location>
</feature>
<feature type="transmembrane region" description="Helical" evidence="2">
    <location>
        <begin position="381"/>
        <end position="401"/>
    </location>
</feature>
<feature type="topological domain" description="Periplasmic" evidence="2">
    <location>
        <begin position="402"/>
        <end position="406"/>
    </location>
</feature>
<feature type="transmembrane region" description="Helical" evidence="2">
    <location>
        <begin position="407"/>
        <end position="427"/>
    </location>
</feature>
<feature type="topological domain" description="Cytoplasmic" evidence="2">
    <location>
        <begin position="428"/>
        <end position="438"/>
    </location>
</feature>
<feature type="transmembrane region" description="Helical" evidence="2">
    <location>
        <begin position="439"/>
        <end position="459"/>
    </location>
</feature>
<feature type="topological domain" description="Periplasmic" evidence="2">
    <location>
        <begin position="460"/>
        <end position="601"/>
    </location>
</feature>
<feature type="domain" description="Thioredoxin">
    <location>
        <begin position="467"/>
        <end position="601"/>
    </location>
</feature>
<feature type="region of interest" description="Disordered" evidence="3">
    <location>
        <begin position="137"/>
        <end position="176"/>
    </location>
</feature>
<feature type="disulfide bond" description="Redox-active" evidence="1">
    <location>
        <begin position="120"/>
        <end position="126"/>
    </location>
</feature>
<feature type="disulfide bond" description="Redox-active" evidence="1">
    <location>
        <begin position="207"/>
        <end position="328"/>
    </location>
</feature>
<feature type="disulfide bond" description="Redox-active" evidence="1">
    <location>
        <begin position="519"/>
        <end position="522"/>
    </location>
</feature>
<keyword id="KW-0997">Cell inner membrane</keyword>
<keyword id="KW-1003">Cell membrane</keyword>
<keyword id="KW-0201">Cytochrome c-type biogenesis</keyword>
<keyword id="KW-1015">Disulfide bond</keyword>
<keyword id="KW-0249">Electron transport</keyword>
<keyword id="KW-0472">Membrane</keyword>
<keyword id="KW-0520">NAD</keyword>
<keyword id="KW-0560">Oxidoreductase</keyword>
<keyword id="KW-0676">Redox-active center</keyword>
<keyword id="KW-0732">Signal</keyword>
<keyword id="KW-0812">Transmembrane</keyword>
<keyword id="KW-1133">Transmembrane helix</keyword>
<keyword id="KW-0813">Transport</keyword>
<reference key="1">
    <citation type="journal article" date="2000" name="Nature">
        <title>Complete DNA sequence of a serogroup A strain of Neisseria meningitidis Z2491.</title>
        <authorList>
            <person name="Parkhill J."/>
            <person name="Achtman M."/>
            <person name="James K.D."/>
            <person name="Bentley S.D."/>
            <person name="Churcher C.M."/>
            <person name="Klee S.R."/>
            <person name="Morelli G."/>
            <person name="Basham D."/>
            <person name="Brown D."/>
            <person name="Chillingworth T."/>
            <person name="Davies R.M."/>
            <person name="Davis P."/>
            <person name="Devlin K."/>
            <person name="Feltwell T."/>
            <person name="Hamlin N."/>
            <person name="Holroyd S."/>
            <person name="Jagels K."/>
            <person name="Leather S."/>
            <person name="Moule S."/>
            <person name="Mungall K.L."/>
            <person name="Quail M.A."/>
            <person name="Rajandream M.A."/>
            <person name="Rutherford K.M."/>
            <person name="Simmonds M."/>
            <person name="Skelton J."/>
            <person name="Whitehead S."/>
            <person name="Spratt B.G."/>
            <person name="Barrell B.G."/>
        </authorList>
    </citation>
    <scope>NUCLEOTIDE SEQUENCE [LARGE SCALE GENOMIC DNA]</scope>
    <source>
        <strain>DSM 15465 / Z2491</strain>
    </source>
</reference>
<sequence>MKKLICLFAVFLMLCGRAFALDANDLLPPEKAFVPELAVADDGVNVRFRIADGYYMYQAKIVGKTDPADLLGQPSFSKGEEKEDEFFGRQTVYHHEAQVAFPYAKAVGEPYKLVLTYQGCAEAGVCYPPVDTEFDISGNGTYHPQTDEPASAKDRFLQPSSQNGSGALPPPKGDEGGDSRFKLSWDTLNANLLAFFLAGLGLSFTACMYPLLPIVSSIVVGDKKAGKARAFVLSVVYVQGLSLTYTLVGIVAGLTGALLTVWLQQAWVVLAASALMVVLALSMFGLFNIQLPNAVQSYFQNQSSRLSGGKIVSVFIMGILSALIVGPCVAPPLAFALGYIGQTGDAVLGGLALYTLALGTGVPLIAIGTFGGHILPRAGDWMNAVKYAFGFILLAVAVYLATPHLPYYLVVALYTLLMLVPACMLLVNGRRQKRRPKAVAFALGGILLIGGAWFGWQGANGKTTALHHFLTLNPPAEAGKSSEHGKMFADTAALKAAMDTALKEHPDKPVVLDFYADWCISCKEMAAYTLNQPEVHQAVDMERFFQIDVTANTPEHQALLKEYGLFGPPGVFVVRSDGSRSEPLLGFVKADKFIEWYEQNR</sequence>
<proteinExistence type="inferred from homology"/>
<name>DSBD_NEIMA</name>
<accession>Q9JTL9</accession>
<accession>A1IST6</accession>
<evidence type="ECO:0000250" key="1"/>
<evidence type="ECO:0000255" key="2"/>
<evidence type="ECO:0000256" key="3">
    <source>
        <dbReference type="SAM" id="MobiDB-lite"/>
    </source>
</evidence>
<evidence type="ECO:0000305" key="4"/>
<organism>
    <name type="scientific">Neisseria meningitidis serogroup A / serotype 4A (strain DSM 15465 / Z2491)</name>
    <dbReference type="NCBI Taxonomy" id="122587"/>
    <lineage>
        <taxon>Bacteria</taxon>
        <taxon>Pseudomonadati</taxon>
        <taxon>Pseudomonadota</taxon>
        <taxon>Betaproteobacteria</taxon>
        <taxon>Neisseriales</taxon>
        <taxon>Neisseriaceae</taxon>
        <taxon>Neisseria</taxon>
    </lineage>
</organism>
<protein>
    <recommendedName>
        <fullName>Thiol:disulfide interchange protein DsbD</fullName>
        <ecNumber>1.8.1.8</ecNumber>
    </recommendedName>
    <alternativeName>
        <fullName>Protein-disulfide reductase</fullName>
        <shortName>Disulfide reductase</shortName>
    </alternativeName>
</protein>
<dbReference type="EC" id="1.8.1.8"/>
<dbReference type="EMBL" id="AL157959">
    <property type="protein sequence ID" value="CAM08848.1"/>
    <property type="status" value="ALT_INIT"/>
    <property type="molecule type" value="Genomic_DNA"/>
</dbReference>
<dbReference type="BMRB" id="Q9JTL9"/>
<dbReference type="SASBDB" id="Q9JTL9"/>
<dbReference type="SMR" id="Q9JTL9"/>
<dbReference type="TCDB" id="5.A.1.1.2">
    <property type="family name" value="the disulfide bond oxidoreductase d (dsbd) family"/>
</dbReference>
<dbReference type="EnsemblBacteria" id="CAM08848">
    <property type="protein sequence ID" value="CAM08848"/>
    <property type="gene ID" value="NMA1719"/>
</dbReference>
<dbReference type="KEGG" id="nma:NMA1719"/>
<dbReference type="HOGENOM" id="CLU_014657_3_0_4"/>
<dbReference type="Proteomes" id="UP000000626">
    <property type="component" value="Chromosome"/>
</dbReference>
<dbReference type="GO" id="GO:0005886">
    <property type="term" value="C:plasma membrane"/>
    <property type="evidence" value="ECO:0007669"/>
    <property type="project" value="UniProtKB-SubCell"/>
</dbReference>
<dbReference type="GO" id="GO:0009055">
    <property type="term" value="F:electron transfer activity"/>
    <property type="evidence" value="ECO:0007669"/>
    <property type="project" value="UniProtKB-UniRule"/>
</dbReference>
<dbReference type="GO" id="GO:0047134">
    <property type="term" value="F:protein-disulfide reductase [NAD(P)H] activity"/>
    <property type="evidence" value="ECO:0007669"/>
    <property type="project" value="UniProtKB-UniRule"/>
</dbReference>
<dbReference type="GO" id="GO:0045454">
    <property type="term" value="P:cell redox homeostasis"/>
    <property type="evidence" value="ECO:0007669"/>
    <property type="project" value="TreeGrafter"/>
</dbReference>
<dbReference type="GO" id="GO:0017004">
    <property type="term" value="P:cytochrome complex assembly"/>
    <property type="evidence" value="ECO:0007669"/>
    <property type="project" value="UniProtKB-UniRule"/>
</dbReference>
<dbReference type="CDD" id="cd02953">
    <property type="entry name" value="DsbDgamma"/>
    <property type="match status" value="1"/>
</dbReference>
<dbReference type="Gene3D" id="3.40.30.10">
    <property type="entry name" value="Glutaredoxin"/>
    <property type="match status" value="1"/>
</dbReference>
<dbReference type="Gene3D" id="2.60.40.1250">
    <property type="entry name" value="Thiol:disulfide interchange protein DsbD, N-terminal domain"/>
    <property type="match status" value="1"/>
</dbReference>
<dbReference type="HAMAP" id="MF_00399">
    <property type="entry name" value="DbsD"/>
    <property type="match status" value="1"/>
</dbReference>
<dbReference type="InterPro" id="IPR003834">
    <property type="entry name" value="Cyt_c_assmbl_TM_dom"/>
</dbReference>
<dbReference type="InterPro" id="IPR035671">
    <property type="entry name" value="DsbD_gamma"/>
</dbReference>
<dbReference type="InterPro" id="IPR028250">
    <property type="entry name" value="DsbDN"/>
</dbReference>
<dbReference type="InterPro" id="IPR036929">
    <property type="entry name" value="DsbDN_sf"/>
</dbReference>
<dbReference type="InterPro" id="IPR022910">
    <property type="entry name" value="Thiol_diS_interchange_DbsD"/>
</dbReference>
<dbReference type="InterPro" id="IPR012336">
    <property type="entry name" value="Thioredoxin-like_fold"/>
</dbReference>
<dbReference type="InterPro" id="IPR036249">
    <property type="entry name" value="Thioredoxin-like_sf"/>
</dbReference>
<dbReference type="InterPro" id="IPR013766">
    <property type="entry name" value="Thioredoxin_domain"/>
</dbReference>
<dbReference type="NCBIfam" id="NF001419">
    <property type="entry name" value="PRK00293.1"/>
    <property type="match status" value="1"/>
</dbReference>
<dbReference type="PANTHER" id="PTHR32234">
    <property type="entry name" value="THIOL:DISULFIDE INTERCHANGE PROTEIN DSBD"/>
    <property type="match status" value="1"/>
</dbReference>
<dbReference type="PANTHER" id="PTHR32234:SF0">
    <property type="entry name" value="THIOL:DISULFIDE INTERCHANGE PROTEIN DSBD"/>
    <property type="match status" value="1"/>
</dbReference>
<dbReference type="Pfam" id="PF11412">
    <property type="entry name" value="DsbD_N"/>
    <property type="match status" value="1"/>
</dbReference>
<dbReference type="Pfam" id="PF02683">
    <property type="entry name" value="DsbD_TM"/>
    <property type="match status" value="1"/>
</dbReference>
<dbReference type="Pfam" id="PF13098">
    <property type="entry name" value="Thioredoxin_2"/>
    <property type="match status" value="1"/>
</dbReference>
<dbReference type="SUPFAM" id="SSF74863">
    <property type="entry name" value="Thiol:disulfide interchange protein DsbD, N-terminal domain (DsbD-alpha)"/>
    <property type="match status" value="1"/>
</dbReference>
<dbReference type="SUPFAM" id="SSF52833">
    <property type="entry name" value="Thioredoxin-like"/>
    <property type="match status" value="1"/>
</dbReference>
<dbReference type="PROSITE" id="PS51352">
    <property type="entry name" value="THIOREDOXIN_2"/>
    <property type="match status" value="1"/>
</dbReference>